<name>HIS4_HALHL</name>
<feature type="chain" id="PRO_0000290480" description="1-(5-phosphoribosyl)-5-[(5-phosphoribosylamino)methylideneamino] imidazole-4-carboxamide isomerase">
    <location>
        <begin position="1"/>
        <end position="246"/>
    </location>
</feature>
<feature type="active site" description="Proton acceptor" evidence="1">
    <location>
        <position position="8"/>
    </location>
</feature>
<feature type="active site" description="Proton donor" evidence="1">
    <location>
        <position position="130"/>
    </location>
</feature>
<comment type="catalytic activity">
    <reaction evidence="1">
        <text>1-(5-phospho-beta-D-ribosyl)-5-[(5-phospho-beta-D-ribosylamino)methylideneamino]imidazole-4-carboxamide = 5-[(5-phospho-1-deoxy-D-ribulos-1-ylimino)methylamino]-1-(5-phospho-beta-D-ribosyl)imidazole-4-carboxamide</text>
        <dbReference type="Rhea" id="RHEA:15469"/>
        <dbReference type="ChEBI" id="CHEBI:58435"/>
        <dbReference type="ChEBI" id="CHEBI:58525"/>
        <dbReference type="EC" id="5.3.1.16"/>
    </reaction>
</comment>
<comment type="pathway">
    <text evidence="1">Amino-acid biosynthesis; L-histidine biosynthesis; L-histidine from 5-phospho-alpha-D-ribose 1-diphosphate: step 4/9.</text>
</comment>
<comment type="subcellular location">
    <subcellularLocation>
        <location evidence="1">Cytoplasm</location>
    </subcellularLocation>
</comment>
<comment type="similarity">
    <text evidence="1">Belongs to the HisA/HisF family.</text>
</comment>
<proteinExistence type="inferred from homology"/>
<reference key="1">
    <citation type="submission" date="2006-12" db="EMBL/GenBank/DDBJ databases">
        <title>Complete sequence of Halorhodospira halophila SL1.</title>
        <authorList>
            <consortium name="US DOE Joint Genome Institute"/>
            <person name="Copeland A."/>
            <person name="Lucas S."/>
            <person name="Lapidus A."/>
            <person name="Barry K."/>
            <person name="Detter J.C."/>
            <person name="Glavina del Rio T."/>
            <person name="Hammon N."/>
            <person name="Israni S."/>
            <person name="Dalin E."/>
            <person name="Tice H."/>
            <person name="Pitluck S."/>
            <person name="Saunders E."/>
            <person name="Brettin T."/>
            <person name="Bruce D."/>
            <person name="Han C."/>
            <person name="Tapia R."/>
            <person name="Schmutz J."/>
            <person name="Larimer F."/>
            <person name="Land M."/>
            <person name="Hauser L."/>
            <person name="Kyrpides N."/>
            <person name="Mikhailova N."/>
            <person name="Hoff W."/>
            <person name="Richardson P."/>
        </authorList>
    </citation>
    <scope>NUCLEOTIDE SEQUENCE [LARGE SCALE GENOMIC DNA]</scope>
    <source>
        <strain>DSM 244 / SL1</strain>
    </source>
</reference>
<evidence type="ECO:0000255" key="1">
    <source>
        <dbReference type="HAMAP-Rule" id="MF_01014"/>
    </source>
</evidence>
<gene>
    <name evidence="1" type="primary">hisA</name>
    <name type="ordered locus">Hhal_1092</name>
</gene>
<dbReference type="EC" id="5.3.1.16" evidence="1"/>
<dbReference type="EMBL" id="CP000544">
    <property type="protein sequence ID" value="ABM61868.1"/>
    <property type="molecule type" value="Genomic_DNA"/>
</dbReference>
<dbReference type="RefSeq" id="WP_011813891.1">
    <property type="nucleotide sequence ID" value="NC_008789.1"/>
</dbReference>
<dbReference type="SMR" id="A1WW06"/>
<dbReference type="STRING" id="349124.Hhal_1092"/>
<dbReference type="KEGG" id="hha:Hhal_1092"/>
<dbReference type="eggNOG" id="COG0106">
    <property type="taxonomic scope" value="Bacteria"/>
</dbReference>
<dbReference type="HOGENOM" id="CLU_048577_1_1_6"/>
<dbReference type="OrthoDB" id="9807749at2"/>
<dbReference type="UniPathway" id="UPA00031">
    <property type="reaction ID" value="UER00009"/>
</dbReference>
<dbReference type="Proteomes" id="UP000000647">
    <property type="component" value="Chromosome"/>
</dbReference>
<dbReference type="GO" id="GO:0005737">
    <property type="term" value="C:cytoplasm"/>
    <property type="evidence" value="ECO:0007669"/>
    <property type="project" value="UniProtKB-SubCell"/>
</dbReference>
<dbReference type="GO" id="GO:0003949">
    <property type="term" value="F:1-(5-phosphoribosyl)-5-[(5-phosphoribosylamino)methylideneamino]imidazole-4-carboxamide isomerase activity"/>
    <property type="evidence" value="ECO:0007669"/>
    <property type="project" value="UniProtKB-UniRule"/>
</dbReference>
<dbReference type="GO" id="GO:0000105">
    <property type="term" value="P:L-histidine biosynthetic process"/>
    <property type="evidence" value="ECO:0007669"/>
    <property type="project" value="UniProtKB-UniRule"/>
</dbReference>
<dbReference type="GO" id="GO:0000162">
    <property type="term" value="P:L-tryptophan biosynthetic process"/>
    <property type="evidence" value="ECO:0007669"/>
    <property type="project" value="TreeGrafter"/>
</dbReference>
<dbReference type="CDD" id="cd04732">
    <property type="entry name" value="HisA"/>
    <property type="match status" value="1"/>
</dbReference>
<dbReference type="FunFam" id="3.20.20.70:FF:000009">
    <property type="entry name" value="1-(5-phosphoribosyl)-5-[(5-phosphoribosylamino)methylideneamino] imidazole-4-carboxamide isomerase"/>
    <property type="match status" value="1"/>
</dbReference>
<dbReference type="Gene3D" id="3.20.20.70">
    <property type="entry name" value="Aldolase class I"/>
    <property type="match status" value="1"/>
</dbReference>
<dbReference type="HAMAP" id="MF_01014">
    <property type="entry name" value="HisA"/>
    <property type="match status" value="1"/>
</dbReference>
<dbReference type="InterPro" id="IPR013785">
    <property type="entry name" value="Aldolase_TIM"/>
</dbReference>
<dbReference type="InterPro" id="IPR006062">
    <property type="entry name" value="His_biosynth"/>
</dbReference>
<dbReference type="InterPro" id="IPR006063">
    <property type="entry name" value="HisA_bact_arch"/>
</dbReference>
<dbReference type="InterPro" id="IPR044524">
    <property type="entry name" value="Isoase_HisA-like"/>
</dbReference>
<dbReference type="InterPro" id="IPR023016">
    <property type="entry name" value="Isoase_HisA-like_bact"/>
</dbReference>
<dbReference type="InterPro" id="IPR011060">
    <property type="entry name" value="RibuloseP-bd_barrel"/>
</dbReference>
<dbReference type="NCBIfam" id="TIGR00007">
    <property type="entry name" value="1-(5-phosphoribosyl)-5-[(5-phosphoribosylamino)methylideneamino]imidazole-4-carboxamide isomerase"/>
    <property type="match status" value="1"/>
</dbReference>
<dbReference type="NCBIfam" id="NF010112">
    <property type="entry name" value="PRK13585.1"/>
    <property type="match status" value="1"/>
</dbReference>
<dbReference type="PANTHER" id="PTHR43090">
    <property type="entry name" value="1-(5-PHOSPHORIBOSYL)-5-[(5-PHOSPHORIBOSYLAMINO)METHYLIDENEAMINO] IMIDAZOLE-4-CARBOXAMIDE ISOMERASE"/>
    <property type="match status" value="1"/>
</dbReference>
<dbReference type="PANTHER" id="PTHR43090:SF2">
    <property type="entry name" value="1-(5-PHOSPHORIBOSYL)-5-[(5-PHOSPHORIBOSYLAMINO)METHYLIDENEAMINO] IMIDAZOLE-4-CARBOXAMIDE ISOMERASE"/>
    <property type="match status" value="1"/>
</dbReference>
<dbReference type="Pfam" id="PF00977">
    <property type="entry name" value="His_biosynth"/>
    <property type="match status" value="1"/>
</dbReference>
<dbReference type="SUPFAM" id="SSF51366">
    <property type="entry name" value="Ribulose-phoshate binding barrel"/>
    <property type="match status" value="1"/>
</dbReference>
<keyword id="KW-0028">Amino-acid biosynthesis</keyword>
<keyword id="KW-0963">Cytoplasm</keyword>
<keyword id="KW-0368">Histidine biosynthesis</keyword>
<keyword id="KW-0413">Isomerase</keyword>
<keyword id="KW-1185">Reference proteome</keyword>
<protein>
    <recommendedName>
        <fullName evidence="1">1-(5-phosphoribosyl)-5-[(5-phosphoribosylamino)methylideneamino] imidazole-4-carboxamide isomerase</fullName>
        <ecNumber evidence="1">5.3.1.16</ecNumber>
    </recommendedName>
    <alternativeName>
        <fullName evidence="1">Phosphoribosylformimino-5-aminoimidazole carboxamide ribotide isomerase</fullName>
    </alternativeName>
</protein>
<organism>
    <name type="scientific">Halorhodospira halophila (strain DSM 244 / SL1)</name>
    <name type="common">Ectothiorhodospira halophila (strain DSM 244 / SL1)</name>
    <dbReference type="NCBI Taxonomy" id="349124"/>
    <lineage>
        <taxon>Bacteria</taxon>
        <taxon>Pseudomonadati</taxon>
        <taxon>Pseudomonadota</taxon>
        <taxon>Gammaproteobacteria</taxon>
        <taxon>Chromatiales</taxon>
        <taxon>Ectothiorhodospiraceae</taxon>
        <taxon>Halorhodospira</taxon>
    </lineage>
</organism>
<sequence>MIVIPAIDLKNGHCVRLRQGRMDDETIFDADPVAVAGRWVEAGAERLHLVDLDGAVRGEPAHEQTIHAIARAYPDTPLQIGGGIRSRETALRYLEAGVGYVIVGTRAVREPAFVEELCREIPGRVCVGLDARGGYVATDGWEQTSEVAAVDLARRFEDAGVAALIFTDIGRDGMMQGCNVEATRELARAVSIPVIASGGVSSLEDVRSLAGSPEGIAGAIVGRAIYDGGLDLATAIRTAQEVGDDR</sequence>
<accession>A1WW06</accession>